<proteinExistence type="predicted"/>
<sequence>MDRCCQRATAFACALRPTKLIDYEEMFRGAMQARAMVANPDQWADSDRDQVNTRHYLSTSMRVALDRGEFFLVYQPIIRLADNRIIGAEALLRWEHPTLGTLLPGRFIDRAENNGLMVPLTAFVLEQACRHVRSWRDHSTDPQPFVSVNVSASTICDPGFLVLVEGVLGETGLPAHALQLELAEDARLSRDEKAVTRLQELSALGVGIAIDDFGIGFSSLAYLPRLPVDVVKLGGKFIECLDGDIQARLANEQITRAMIDLGDKLGITVTAKLVETPSQAARLRAFGCKAAQGWHFAKALPVDFFRE</sequence>
<keyword id="KW-1003">Cell membrane</keyword>
<keyword id="KW-0472">Membrane</keyword>
<keyword id="KW-1185">Reference proteome</keyword>
<keyword id="KW-0812">Transmembrane</keyword>
<keyword id="KW-1133">Transmembrane helix</keyword>
<gene>
    <name type="ordered locus">Rv1357c</name>
    <name type="ORF">MTCY02B10.21c</name>
</gene>
<organism>
    <name type="scientific">Mycobacterium tuberculosis (strain ATCC 25618 / H37Rv)</name>
    <dbReference type="NCBI Taxonomy" id="83332"/>
    <lineage>
        <taxon>Bacteria</taxon>
        <taxon>Bacillati</taxon>
        <taxon>Actinomycetota</taxon>
        <taxon>Actinomycetes</taxon>
        <taxon>Mycobacteriales</taxon>
        <taxon>Mycobacteriaceae</taxon>
        <taxon>Mycobacterium</taxon>
        <taxon>Mycobacterium tuberculosis complex</taxon>
    </lineage>
</organism>
<name>Y1357_MYCTU</name>
<dbReference type="EMBL" id="AL123456">
    <property type="protein sequence ID" value="CCP44115.1"/>
    <property type="molecule type" value="Genomic_DNA"/>
</dbReference>
<dbReference type="PIR" id="D70741">
    <property type="entry name" value="D70741"/>
</dbReference>
<dbReference type="RefSeq" id="NP_215873.1">
    <property type="nucleotide sequence ID" value="NC_000962.3"/>
</dbReference>
<dbReference type="RefSeq" id="WP_003406987.1">
    <property type="nucleotide sequence ID" value="NZ_NVQJ01000031.1"/>
</dbReference>
<dbReference type="SMR" id="P9WM07"/>
<dbReference type="STRING" id="83332.Rv1357c"/>
<dbReference type="PaxDb" id="83332-Rv1357c"/>
<dbReference type="DNASU" id="886815"/>
<dbReference type="GeneID" id="886815"/>
<dbReference type="KEGG" id="mtu:Rv1357c"/>
<dbReference type="KEGG" id="mtv:RVBD_1357c"/>
<dbReference type="TubercuList" id="Rv1357c"/>
<dbReference type="eggNOG" id="COG2200">
    <property type="taxonomic scope" value="Bacteria"/>
</dbReference>
<dbReference type="InParanoid" id="P9WM07"/>
<dbReference type="OrthoDB" id="23692at2"/>
<dbReference type="PhylomeDB" id="P9WM07"/>
<dbReference type="Proteomes" id="UP000001584">
    <property type="component" value="Chromosome"/>
</dbReference>
<dbReference type="GO" id="GO:0005886">
    <property type="term" value="C:plasma membrane"/>
    <property type="evidence" value="ECO:0007669"/>
    <property type="project" value="UniProtKB-SubCell"/>
</dbReference>
<dbReference type="GO" id="GO:0071111">
    <property type="term" value="F:cyclic-guanylate-specific phosphodiesterase activity"/>
    <property type="evidence" value="ECO:0000314"/>
    <property type="project" value="MTBBASE"/>
</dbReference>
<dbReference type="GO" id="GO:0051701">
    <property type="term" value="P:biological process involved in interaction with host"/>
    <property type="evidence" value="ECO:0000315"/>
    <property type="project" value="MTBBASE"/>
</dbReference>
<dbReference type="GO" id="GO:0009214">
    <property type="term" value="P:cyclic nucleotide catabolic process"/>
    <property type="evidence" value="ECO:0000314"/>
    <property type="project" value="MTBBASE"/>
</dbReference>
<dbReference type="CDD" id="cd01948">
    <property type="entry name" value="EAL"/>
    <property type="match status" value="1"/>
</dbReference>
<dbReference type="Gene3D" id="3.20.20.450">
    <property type="entry name" value="EAL domain"/>
    <property type="match status" value="1"/>
</dbReference>
<dbReference type="InterPro" id="IPR050706">
    <property type="entry name" value="Cyclic-di-GMP_PDE-like"/>
</dbReference>
<dbReference type="InterPro" id="IPR001633">
    <property type="entry name" value="EAL_dom"/>
</dbReference>
<dbReference type="InterPro" id="IPR035919">
    <property type="entry name" value="EAL_sf"/>
</dbReference>
<dbReference type="PANTHER" id="PTHR33121">
    <property type="entry name" value="CYCLIC DI-GMP PHOSPHODIESTERASE PDEF"/>
    <property type="match status" value="1"/>
</dbReference>
<dbReference type="PANTHER" id="PTHR33121:SF70">
    <property type="entry name" value="SIGNALING PROTEIN YKOW"/>
    <property type="match status" value="1"/>
</dbReference>
<dbReference type="Pfam" id="PF00563">
    <property type="entry name" value="EAL"/>
    <property type="match status" value="1"/>
</dbReference>
<dbReference type="SMART" id="SM00052">
    <property type="entry name" value="EAL"/>
    <property type="match status" value="1"/>
</dbReference>
<dbReference type="SUPFAM" id="SSF141868">
    <property type="entry name" value="EAL domain-like"/>
    <property type="match status" value="1"/>
</dbReference>
<dbReference type="PROSITE" id="PS50883">
    <property type="entry name" value="EAL"/>
    <property type="match status" value="1"/>
</dbReference>
<accession>P9WM07</accession>
<accession>L0T814</accession>
<accession>P64829</accession>
<accession>Q11027</accession>
<reference key="1">
    <citation type="journal article" date="1998" name="Nature">
        <title>Deciphering the biology of Mycobacterium tuberculosis from the complete genome sequence.</title>
        <authorList>
            <person name="Cole S.T."/>
            <person name="Brosch R."/>
            <person name="Parkhill J."/>
            <person name="Garnier T."/>
            <person name="Churcher C.M."/>
            <person name="Harris D.E."/>
            <person name="Gordon S.V."/>
            <person name="Eiglmeier K."/>
            <person name="Gas S."/>
            <person name="Barry C.E. III"/>
            <person name="Tekaia F."/>
            <person name="Badcock K."/>
            <person name="Basham D."/>
            <person name="Brown D."/>
            <person name="Chillingworth T."/>
            <person name="Connor R."/>
            <person name="Davies R.M."/>
            <person name="Devlin K."/>
            <person name="Feltwell T."/>
            <person name="Gentles S."/>
            <person name="Hamlin N."/>
            <person name="Holroyd S."/>
            <person name="Hornsby T."/>
            <person name="Jagels K."/>
            <person name="Krogh A."/>
            <person name="McLean J."/>
            <person name="Moule S."/>
            <person name="Murphy L.D."/>
            <person name="Oliver S."/>
            <person name="Osborne J."/>
            <person name="Quail M.A."/>
            <person name="Rajandream M.A."/>
            <person name="Rogers J."/>
            <person name="Rutter S."/>
            <person name="Seeger K."/>
            <person name="Skelton S."/>
            <person name="Squares S."/>
            <person name="Squares R."/>
            <person name="Sulston J.E."/>
            <person name="Taylor K."/>
            <person name="Whitehead S."/>
            <person name="Barrell B.G."/>
        </authorList>
    </citation>
    <scope>NUCLEOTIDE SEQUENCE [LARGE SCALE GENOMIC DNA]</scope>
    <source>
        <strain>ATCC 25618 / H37Rv</strain>
    </source>
</reference>
<comment type="subcellular location">
    <subcellularLocation>
        <location evidence="3">Cell membrane</location>
        <topology evidence="3">Multi-pass membrane protein</topology>
    </subcellularLocation>
</comment>
<evidence type="ECO:0000255" key="1"/>
<evidence type="ECO:0000255" key="2">
    <source>
        <dbReference type="PROSITE-ProRule" id="PRU00074"/>
    </source>
</evidence>
<evidence type="ECO:0000305" key="3"/>
<protein>
    <recommendedName>
        <fullName>Uncharacterized protein Rv1357c</fullName>
    </recommendedName>
</protein>
<feature type="chain" id="PRO_0000103828" description="Uncharacterized protein Rv1357c">
    <location>
        <begin position="1"/>
        <end position="307"/>
    </location>
</feature>
<feature type="transmembrane region" description="Helical" evidence="1">
    <location>
        <begin position="158"/>
        <end position="178"/>
    </location>
</feature>
<feature type="transmembrane region" description="Helical" evidence="1">
    <location>
        <begin position="203"/>
        <end position="223"/>
    </location>
</feature>
<feature type="domain" description="EAL" evidence="2">
    <location>
        <begin position="54"/>
        <end position="307"/>
    </location>
</feature>